<proteinExistence type="inferred from homology"/>
<sequence length="449" mass="49448">MSHITFDYSKVLESFAGQHEIDFLQGQVTEADKLLREGTGPGSDFLGWLDLPENYDKEEFARILTAAEKIKADSEVLVVIGIGGSYLGAKAAIDFLNHHFANLQTAKERKAPQILYAGNSISSTYLADLVEYVQDKEFSVNVISKSGTTTEPAIAFRVFKELLVKKYGQEEANKRIYATTDKVKGAVKVEADANNWETFVVPDNVGGRFSVLTAVGLLPIAASGADITALMEGANAAHKDLSSDKISENIAYQYAAVRNVLYRKGYITEILANYEPSLQYFGEWWKQLAGESEGKDQKGIYPTSANFSTDLHSLGQFIQEGYRNLFETVIRVDNPRKNVIIPELAEDLDGLGYLQGKDVDFVNKKATDGVLLAHTDGGVPNMFVTLPAQDEFTLGYTIYFFELAIAVSGYMNAVNPFDQPGVEAYKRNMFALLGKPGFEALSAELNARL</sequence>
<keyword id="KW-0963">Cytoplasm</keyword>
<keyword id="KW-0312">Gluconeogenesis</keyword>
<keyword id="KW-0324">Glycolysis</keyword>
<keyword id="KW-0413">Isomerase</keyword>
<name>G6PI_STRPD</name>
<feature type="chain" id="PRO_0000252652" description="Glucose-6-phosphate isomerase">
    <location>
        <begin position="1"/>
        <end position="449"/>
    </location>
</feature>
<feature type="active site" description="Proton donor" evidence="1">
    <location>
        <position position="291"/>
    </location>
</feature>
<feature type="active site" evidence="1">
    <location>
        <position position="312"/>
    </location>
</feature>
<feature type="active site" evidence="1">
    <location>
        <position position="426"/>
    </location>
</feature>
<comment type="function">
    <text evidence="1">Catalyzes the reversible isomerization of glucose-6-phosphate to fructose-6-phosphate.</text>
</comment>
<comment type="catalytic activity">
    <reaction evidence="1">
        <text>alpha-D-glucose 6-phosphate = beta-D-fructose 6-phosphate</text>
        <dbReference type="Rhea" id="RHEA:11816"/>
        <dbReference type="ChEBI" id="CHEBI:57634"/>
        <dbReference type="ChEBI" id="CHEBI:58225"/>
        <dbReference type="EC" id="5.3.1.9"/>
    </reaction>
</comment>
<comment type="pathway">
    <text evidence="1">Carbohydrate biosynthesis; gluconeogenesis.</text>
</comment>
<comment type="pathway">
    <text evidence="1">Carbohydrate degradation; glycolysis; D-glyceraldehyde 3-phosphate and glycerone phosphate from D-glucose: step 2/4.</text>
</comment>
<comment type="subcellular location">
    <subcellularLocation>
        <location evidence="1">Cytoplasm</location>
    </subcellularLocation>
</comment>
<comment type="similarity">
    <text evidence="1">Belongs to the GPI family.</text>
</comment>
<evidence type="ECO:0000255" key="1">
    <source>
        <dbReference type="HAMAP-Rule" id="MF_00473"/>
    </source>
</evidence>
<reference key="1">
    <citation type="journal article" date="2006" name="Proc. Natl. Acad. Sci. U.S.A.">
        <title>Molecular genetic anatomy of inter- and intraserotype variation in the human bacterial pathogen group A Streptococcus.</title>
        <authorList>
            <person name="Beres S.B."/>
            <person name="Richter E.W."/>
            <person name="Nagiec M.J."/>
            <person name="Sumby P."/>
            <person name="Porcella S.F."/>
            <person name="DeLeo F.R."/>
            <person name="Musser J.M."/>
        </authorList>
    </citation>
    <scope>NUCLEOTIDE SEQUENCE [LARGE SCALE GENOMIC DNA]</scope>
    <source>
        <strain>MGAS10270</strain>
    </source>
</reference>
<gene>
    <name evidence="1" type="primary">pgi</name>
    <name type="ordered locus">MGAS10270_Spy0187</name>
</gene>
<accession>Q1JIS1</accession>
<dbReference type="EC" id="5.3.1.9" evidence="1"/>
<dbReference type="EMBL" id="CP000260">
    <property type="protein sequence ID" value="ABF33252.1"/>
    <property type="molecule type" value="Genomic_DNA"/>
</dbReference>
<dbReference type="SMR" id="Q1JIS1"/>
<dbReference type="KEGG" id="sph:MGAS10270_Spy0187"/>
<dbReference type="HOGENOM" id="CLU_037303_0_1_9"/>
<dbReference type="UniPathway" id="UPA00109">
    <property type="reaction ID" value="UER00181"/>
</dbReference>
<dbReference type="UniPathway" id="UPA00138"/>
<dbReference type="Proteomes" id="UP000002436">
    <property type="component" value="Chromosome"/>
</dbReference>
<dbReference type="GO" id="GO:0005829">
    <property type="term" value="C:cytosol"/>
    <property type="evidence" value="ECO:0007669"/>
    <property type="project" value="TreeGrafter"/>
</dbReference>
<dbReference type="GO" id="GO:0097367">
    <property type="term" value="F:carbohydrate derivative binding"/>
    <property type="evidence" value="ECO:0007669"/>
    <property type="project" value="InterPro"/>
</dbReference>
<dbReference type="GO" id="GO:0004347">
    <property type="term" value="F:glucose-6-phosphate isomerase activity"/>
    <property type="evidence" value="ECO:0007669"/>
    <property type="project" value="UniProtKB-UniRule"/>
</dbReference>
<dbReference type="GO" id="GO:0048029">
    <property type="term" value="F:monosaccharide binding"/>
    <property type="evidence" value="ECO:0007669"/>
    <property type="project" value="TreeGrafter"/>
</dbReference>
<dbReference type="GO" id="GO:0006094">
    <property type="term" value="P:gluconeogenesis"/>
    <property type="evidence" value="ECO:0007669"/>
    <property type="project" value="UniProtKB-UniRule"/>
</dbReference>
<dbReference type="GO" id="GO:0051156">
    <property type="term" value="P:glucose 6-phosphate metabolic process"/>
    <property type="evidence" value="ECO:0007669"/>
    <property type="project" value="TreeGrafter"/>
</dbReference>
<dbReference type="GO" id="GO:0006096">
    <property type="term" value="P:glycolytic process"/>
    <property type="evidence" value="ECO:0007669"/>
    <property type="project" value="UniProtKB-UniRule"/>
</dbReference>
<dbReference type="CDD" id="cd05015">
    <property type="entry name" value="SIS_PGI_1"/>
    <property type="match status" value="1"/>
</dbReference>
<dbReference type="CDD" id="cd05016">
    <property type="entry name" value="SIS_PGI_2"/>
    <property type="match status" value="1"/>
</dbReference>
<dbReference type="FunFam" id="3.40.50.10490:FF:000015">
    <property type="entry name" value="Glucose-6-phosphate isomerase"/>
    <property type="match status" value="1"/>
</dbReference>
<dbReference type="FunFam" id="3.40.50.10490:FF:000016">
    <property type="entry name" value="Glucose-6-phosphate isomerase"/>
    <property type="match status" value="1"/>
</dbReference>
<dbReference type="Gene3D" id="3.40.50.10490">
    <property type="entry name" value="Glucose-6-phosphate isomerase like protein, domain 1"/>
    <property type="match status" value="2"/>
</dbReference>
<dbReference type="HAMAP" id="MF_00473">
    <property type="entry name" value="G6P_isomerase"/>
    <property type="match status" value="1"/>
</dbReference>
<dbReference type="InterPro" id="IPR001672">
    <property type="entry name" value="G6P_Isomerase"/>
</dbReference>
<dbReference type="InterPro" id="IPR018189">
    <property type="entry name" value="Phosphoglucose_isomerase_CS"/>
</dbReference>
<dbReference type="InterPro" id="IPR046348">
    <property type="entry name" value="SIS_dom_sf"/>
</dbReference>
<dbReference type="InterPro" id="IPR035476">
    <property type="entry name" value="SIS_PGI_1"/>
</dbReference>
<dbReference type="InterPro" id="IPR035482">
    <property type="entry name" value="SIS_PGI_2"/>
</dbReference>
<dbReference type="NCBIfam" id="NF010697">
    <property type="entry name" value="PRK14097.1"/>
    <property type="match status" value="1"/>
</dbReference>
<dbReference type="PANTHER" id="PTHR11469">
    <property type="entry name" value="GLUCOSE-6-PHOSPHATE ISOMERASE"/>
    <property type="match status" value="1"/>
</dbReference>
<dbReference type="PANTHER" id="PTHR11469:SF1">
    <property type="entry name" value="GLUCOSE-6-PHOSPHATE ISOMERASE"/>
    <property type="match status" value="1"/>
</dbReference>
<dbReference type="Pfam" id="PF00342">
    <property type="entry name" value="PGI"/>
    <property type="match status" value="1"/>
</dbReference>
<dbReference type="PRINTS" id="PR00662">
    <property type="entry name" value="G6PISOMERASE"/>
</dbReference>
<dbReference type="SUPFAM" id="SSF53697">
    <property type="entry name" value="SIS domain"/>
    <property type="match status" value="1"/>
</dbReference>
<dbReference type="PROSITE" id="PS00765">
    <property type="entry name" value="P_GLUCOSE_ISOMERASE_1"/>
    <property type="match status" value="1"/>
</dbReference>
<dbReference type="PROSITE" id="PS00174">
    <property type="entry name" value="P_GLUCOSE_ISOMERASE_2"/>
    <property type="match status" value="1"/>
</dbReference>
<dbReference type="PROSITE" id="PS51463">
    <property type="entry name" value="P_GLUCOSE_ISOMERASE_3"/>
    <property type="match status" value="1"/>
</dbReference>
<organism>
    <name type="scientific">Streptococcus pyogenes serotype M2 (strain MGAS10270)</name>
    <dbReference type="NCBI Taxonomy" id="370552"/>
    <lineage>
        <taxon>Bacteria</taxon>
        <taxon>Bacillati</taxon>
        <taxon>Bacillota</taxon>
        <taxon>Bacilli</taxon>
        <taxon>Lactobacillales</taxon>
        <taxon>Streptococcaceae</taxon>
        <taxon>Streptococcus</taxon>
    </lineage>
</organism>
<protein>
    <recommendedName>
        <fullName evidence="1">Glucose-6-phosphate isomerase</fullName>
        <shortName evidence="1">GPI</shortName>
        <ecNumber evidence="1">5.3.1.9</ecNumber>
    </recommendedName>
    <alternativeName>
        <fullName evidence="1">Phosphoglucose isomerase</fullName>
        <shortName evidence="1">PGI</shortName>
    </alternativeName>
    <alternativeName>
        <fullName evidence="1">Phosphohexose isomerase</fullName>
        <shortName evidence="1">PHI</shortName>
    </alternativeName>
</protein>